<sequence length="206" mass="23068">MVEEETITVEGDYETLIPIDEYLAAGVHIGTQQKTSDMMKYIYRVRTDGLYVLDVQATDKRIRLAGKFLANYEPSKILVVSARQYGQRPATMFAKAVGARANVGRFIPNTLTNPHFAGYIEPDVLLVTDPAGDGQAVKEAVDIGIPVVALCDTNNMTSNVDLVIPTNNKGRKALTLIYWLLARQVLRERGEEDRFKYTVSDFEMEF</sequence>
<dbReference type="EMBL" id="CP000477">
    <property type="protein sequence ID" value="ABK14269.1"/>
    <property type="molecule type" value="Genomic_DNA"/>
</dbReference>
<dbReference type="RefSeq" id="WP_011695667.1">
    <property type="nucleotide sequence ID" value="NC_008553.1"/>
</dbReference>
<dbReference type="SMR" id="A0B6E5"/>
<dbReference type="STRING" id="349307.Mthe_0478"/>
<dbReference type="GeneID" id="4463095"/>
<dbReference type="KEGG" id="mtp:Mthe_0478"/>
<dbReference type="HOGENOM" id="CLU_058171_3_0_2"/>
<dbReference type="OrthoDB" id="371797at2157"/>
<dbReference type="Proteomes" id="UP000000674">
    <property type="component" value="Chromosome"/>
</dbReference>
<dbReference type="GO" id="GO:0015935">
    <property type="term" value="C:small ribosomal subunit"/>
    <property type="evidence" value="ECO:0007669"/>
    <property type="project" value="InterPro"/>
</dbReference>
<dbReference type="GO" id="GO:0003735">
    <property type="term" value="F:structural constituent of ribosome"/>
    <property type="evidence" value="ECO:0007669"/>
    <property type="project" value="InterPro"/>
</dbReference>
<dbReference type="GO" id="GO:0006412">
    <property type="term" value="P:translation"/>
    <property type="evidence" value="ECO:0007669"/>
    <property type="project" value="UniProtKB-UniRule"/>
</dbReference>
<dbReference type="CDD" id="cd01425">
    <property type="entry name" value="RPS2"/>
    <property type="match status" value="1"/>
</dbReference>
<dbReference type="FunFam" id="3.40.50.10490:FF:000030">
    <property type="entry name" value="30S ribosomal protein S2"/>
    <property type="match status" value="1"/>
</dbReference>
<dbReference type="Gene3D" id="3.40.50.10490">
    <property type="entry name" value="Glucose-6-phosphate isomerase like protein, domain 1"/>
    <property type="match status" value="1"/>
</dbReference>
<dbReference type="HAMAP" id="MF_00291_A">
    <property type="entry name" value="Ribosomal_uS2_A"/>
    <property type="match status" value="1"/>
</dbReference>
<dbReference type="InterPro" id="IPR001865">
    <property type="entry name" value="Ribosomal_uS2"/>
</dbReference>
<dbReference type="InterPro" id="IPR023454">
    <property type="entry name" value="Ribosomal_uS2_arc"/>
</dbReference>
<dbReference type="InterPro" id="IPR018130">
    <property type="entry name" value="Ribosomal_uS2_CS"/>
</dbReference>
<dbReference type="InterPro" id="IPR005707">
    <property type="entry name" value="Ribosomal_uS2_euk/arc"/>
</dbReference>
<dbReference type="InterPro" id="IPR023591">
    <property type="entry name" value="Ribosomal_uS2_flav_dom_sf"/>
</dbReference>
<dbReference type="NCBIfam" id="TIGR01012">
    <property type="entry name" value="uS2_euk_arch"/>
    <property type="match status" value="1"/>
</dbReference>
<dbReference type="PANTHER" id="PTHR11489">
    <property type="entry name" value="40S RIBOSOMAL PROTEIN SA"/>
    <property type="match status" value="1"/>
</dbReference>
<dbReference type="Pfam" id="PF00318">
    <property type="entry name" value="Ribosomal_S2"/>
    <property type="match status" value="2"/>
</dbReference>
<dbReference type="PRINTS" id="PR00395">
    <property type="entry name" value="RIBOSOMALS2"/>
</dbReference>
<dbReference type="SUPFAM" id="SSF52313">
    <property type="entry name" value="Ribosomal protein S2"/>
    <property type="match status" value="1"/>
</dbReference>
<dbReference type="PROSITE" id="PS00962">
    <property type="entry name" value="RIBOSOMAL_S2_1"/>
    <property type="match status" value="1"/>
</dbReference>
<dbReference type="PROSITE" id="PS00963">
    <property type="entry name" value="RIBOSOMAL_S2_2"/>
    <property type="match status" value="1"/>
</dbReference>
<gene>
    <name evidence="1" type="primary">rps2</name>
    <name type="ordered locus">Mthe_0478</name>
</gene>
<name>RS2_METTP</name>
<reference key="1">
    <citation type="submission" date="2006-10" db="EMBL/GenBank/DDBJ databases">
        <title>Complete sequence of Methanosaeta thermophila PT.</title>
        <authorList>
            <consortium name="US DOE Joint Genome Institute"/>
            <person name="Copeland A."/>
            <person name="Lucas S."/>
            <person name="Lapidus A."/>
            <person name="Barry K."/>
            <person name="Detter J.C."/>
            <person name="Glavina del Rio T."/>
            <person name="Hammon N."/>
            <person name="Israni S."/>
            <person name="Pitluck S."/>
            <person name="Chain P."/>
            <person name="Malfatti S."/>
            <person name="Shin M."/>
            <person name="Vergez L."/>
            <person name="Schmutz J."/>
            <person name="Larimer F."/>
            <person name="Land M."/>
            <person name="Hauser L."/>
            <person name="Kyrpides N."/>
            <person name="Kim E."/>
            <person name="Smith K.S."/>
            <person name="Ingram-Smith C."/>
            <person name="Richardson P."/>
        </authorList>
    </citation>
    <scope>NUCLEOTIDE SEQUENCE [LARGE SCALE GENOMIC DNA]</scope>
    <source>
        <strain>DSM 6194 / JCM 14653 / NBRC 101360 / PT</strain>
    </source>
</reference>
<feature type="chain" id="PRO_0000352070" description="Small ribosomal subunit protein uS2">
    <location>
        <begin position="1"/>
        <end position="206"/>
    </location>
</feature>
<organism>
    <name type="scientific">Methanothrix thermoacetophila (strain DSM 6194 / JCM 14653 / NBRC 101360 / PT)</name>
    <name type="common">Methanosaeta thermophila</name>
    <dbReference type="NCBI Taxonomy" id="349307"/>
    <lineage>
        <taxon>Archaea</taxon>
        <taxon>Methanobacteriati</taxon>
        <taxon>Methanobacteriota</taxon>
        <taxon>Stenosarchaea group</taxon>
        <taxon>Methanomicrobia</taxon>
        <taxon>Methanotrichales</taxon>
        <taxon>Methanotrichaceae</taxon>
        <taxon>Methanothrix</taxon>
    </lineage>
</organism>
<accession>A0B6E5</accession>
<protein>
    <recommendedName>
        <fullName evidence="1">Small ribosomal subunit protein uS2</fullName>
    </recommendedName>
    <alternativeName>
        <fullName evidence="2">30S ribosomal protein S2</fullName>
    </alternativeName>
</protein>
<comment type="similarity">
    <text evidence="1">Belongs to the universal ribosomal protein uS2 family.</text>
</comment>
<evidence type="ECO:0000255" key="1">
    <source>
        <dbReference type="HAMAP-Rule" id="MF_00291"/>
    </source>
</evidence>
<evidence type="ECO:0000305" key="2"/>
<keyword id="KW-1185">Reference proteome</keyword>
<keyword id="KW-0687">Ribonucleoprotein</keyword>
<keyword id="KW-0689">Ribosomal protein</keyword>
<proteinExistence type="inferred from homology"/>